<keyword id="KW-0378">Hydrolase</keyword>
<keyword id="KW-0614">Plasmid</keyword>
<keyword id="KW-1185">Reference proteome</keyword>
<proteinExistence type="inferred from homology"/>
<dbReference type="EC" id="3.-.-.-"/>
<dbReference type="EMBL" id="U00090">
    <property type="protein sequence ID" value="AAB91862.1"/>
    <property type="molecule type" value="Genomic_DNA"/>
</dbReference>
<dbReference type="RefSeq" id="NP_444075.1">
    <property type="nucleotide sequence ID" value="NC_000914.2"/>
</dbReference>
<dbReference type="SMR" id="P55663"/>
<dbReference type="KEGG" id="rhi:NGR_a01500"/>
<dbReference type="PATRIC" id="fig|394.7.peg.135"/>
<dbReference type="eggNOG" id="COG1473">
    <property type="taxonomic scope" value="Bacteria"/>
</dbReference>
<dbReference type="HOGENOM" id="CLU_023257_0_1_5"/>
<dbReference type="OrthoDB" id="9777385at2"/>
<dbReference type="Proteomes" id="UP000001054">
    <property type="component" value="Plasmid pNGR234a"/>
</dbReference>
<dbReference type="GO" id="GO:0016787">
    <property type="term" value="F:hydrolase activity"/>
    <property type="evidence" value="ECO:0007669"/>
    <property type="project" value="UniProtKB-KW"/>
</dbReference>
<dbReference type="CDD" id="cd03886">
    <property type="entry name" value="M20_Acy1"/>
    <property type="match status" value="1"/>
</dbReference>
<dbReference type="FunFam" id="3.30.70.360:FF:000001">
    <property type="entry name" value="N-acetyldiaminopimelate deacetylase"/>
    <property type="match status" value="1"/>
</dbReference>
<dbReference type="Gene3D" id="3.30.70.360">
    <property type="match status" value="1"/>
</dbReference>
<dbReference type="Gene3D" id="3.40.630.10">
    <property type="entry name" value="Zn peptidases"/>
    <property type="match status" value="1"/>
</dbReference>
<dbReference type="InterPro" id="IPR017439">
    <property type="entry name" value="Amidohydrolase"/>
</dbReference>
<dbReference type="InterPro" id="IPR036264">
    <property type="entry name" value="Bact_exopeptidase_dim_dom"/>
</dbReference>
<dbReference type="InterPro" id="IPR002933">
    <property type="entry name" value="Peptidase_M20"/>
</dbReference>
<dbReference type="InterPro" id="IPR011650">
    <property type="entry name" value="Peptidase_M20_dimer"/>
</dbReference>
<dbReference type="NCBIfam" id="TIGR01891">
    <property type="entry name" value="amidohydrolases"/>
    <property type="match status" value="1"/>
</dbReference>
<dbReference type="PANTHER" id="PTHR11014:SF63">
    <property type="entry name" value="METALLOPEPTIDASE, PUTATIVE (AFU_ORTHOLOGUE AFUA_6G09600)-RELATED"/>
    <property type="match status" value="1"/>
</dbReference>
<dbReference type="PANTHER" id="PTHR11014">
    <property type="entry name" value="PEPTIDASE M20 FAMILY MEMBER"/>
    <property type="match status" value="1"/>
</dbReference>
<dbReference type="Pfam" id="PF07687">
    <property type="entry name" value="M20_dimer"/>
    <property type="match status" value="1"/>
</dbReference>
<dbReference type="Pfam" id="PF01546">
    <property type="entry name" value="Peptidase_M20"/>
    <property type="match status" value="1"/>
</dbReference>
<dbReference type="PIRSF" id="PIRSF005962">
    <property type="entry name" value="Pept_M20D_amidohydro"/>
    <property type="match status" value="1"/>
</dbReference>
<dbReference type="SUPFAM" id="SSF55031">
    <property type="entry name" value="Bacterial exopeptidase dimerisation domain"/>
    <property type="match status" value="1"/>
</dbReference>
<dbReference type="SUPFAM" id="SSF53187">
    <property type="entry name" value="Zn-dependent exopeptidases"/>
    <property type="match status" value="1"/>
</dbReference>
<feature type="chain" id="PRO_0000061965" description="Uncharacterized hydrolase y4tI">
    <location>
        <begin position="1"/>
        <end position="402"/>
    </location>
</feature>
<comment type="similarity">
    <text evidence="1">Belongs to the peptidase M20 family.</text>
</comment>
<reference key="1">
    <citation type="journal article" date="1997" name="Nature">
        <title>Molecular basis of symbiosis between Rhizobium and legumes.</title>
        <authorList>
            <person name="Freiberg C.A."/>
            <person name="Fellay R."/>
            <person name="Bairoch A."/>
            <person name="Broughton W.J."/>
            <person name="Rosenthal A."/>
            <person name="Perret X."/>
        </authorList>
    </citation>
    <scope>NUCLEOTIDE SEQUENCE [LARGE SCALE GENOMIC DNA]</scope>
    <source>
        <strain>NBRC 101917 / NGR234</strain>
    </source>
</reference>
<reference key="2">
    <citation type="journal article" date="2009" name="Appl. Environ. Microbiol.">
        <title>Rhizobium sp. strain NGR234 possesses a remarkable number of secretion systems.</title>
        <authorList>
            <person name="Schmeisser C."/>
            <person name="Liesegang H."/>
            <person name="Krysciak D."/>
            <person name="Bakkou N."/>
            <person name="Le Quere A."/>
            <person name="Wollherr A."/>
            <person name="Heinemeyer I."/>
            <person name="Morgenstern B."/>
            <person name="Pommerening-Roeser A."/>
            <person name="Flores M."/>
            <person name="Palacios R."/>
            <person name="Brenner S."/>
            <person name="Gottschalk G."/>
            <person name="Schmitz R.A."/>
            <person name="Broughton W.J."/>
            <person name="Perret X."/>
            <person name="Strittmatter A.W."/>
            <person name="Streit W.R."/>
        </authorList>
    </citation>
    <scope>NUCLEOTIDE SEQUENCE [LARGE SCALE GENOMIC DNA]</scope>
    <source>
        <strain>NBRC 101917 / NGR234</strain>
    </source>
</reference>
<accession>P55663</accession>
<gene>
    <name type="ordered locus">NGR_a01500</name>
    <name type="ORF">y4tI</name>
</gene>
<protein>
    <recommendedName>
        <fullName>Uncharacterized hydrolase y4tI</fullName>
        <ecNumber>3.-.-.-</ecNumber>
    </recommendedName>
</protein>
<sequence>MRAAMNFRINNSLLIEAERDAVLELRHAMHREPELSNNEWKTQQRIRGMLERFGLKGATVFHNTGLYIDIEGSASGPKRAVAVRGDIDALPIQETRDDLPYQSHVEGVMHACGHDLHASIAMGVALAFHRMRNNFAGKLRVFFQPAEEAEPLGGRTVLEERLLEGFDNAVGFHVTPSIQVGKFGAREGAVSKSSDQFKVTVSGSAAHGSTPHNGIDAITIAAAFVNEVQKVISREVPVDDRSVITIGTIHGGEATNIICPKVVMEGTIRTTNPELRPLLSQRVREIAEGVAALHRGKAEVVVTSGEPAVINDPEMVRLFRDAVSDMAGSDALTQGKAISGSDDFGFYSQCIPSIYFWFGSGEPGNESGVHTPTFAVSDDVLIPTTELAVKYCFDLLHGQSAR</sequence>
<organism>
    <name type="scientific">Sinorhizobium fredii (strain NBRC 101917 / NGR234)</name>
    <dbReference type="NCBI Taxonomy" id="394"/>
    <lineage>
        <taxon>Bacteria</taxon>
        <taxon>Pseudomonadati</taxon>
        <taxon>Pseudomonadota</taxon>
        <taxon>Alphaproteobacteria</taxon>
        <taxon>Hyphomicrobiales</taxon>
        <taxon>Rhizobiaceae</taxon>
        <taxon>Sinorhizobium/Ensifer group</taxon>
        <taxon>Sinorhizobium</taxon>
    </lineage>
</organism>
<geneLocation type="plasmid">
    <name>sym pNGR234a</name>
</geneLocation>
<evidence type="ECO:0000305" key="1"/>
<name>Y4TI_SINFN</name>